<proteinExistence type="inferred from homology"/>
<feature type="signal peptide" evidence="2">
    <location>
        <begin position="1"/>
        <end position="23"/>
    </location>
</feature>
<feature type="chain" id="PRO_0000301794" description="Nitrogen permease regulator 3">
    <location>
        <begin position="24"/>
        <end position="731"/>
    </location>
</feature>
<feature type="region of interest" description="Disordered" evidence="3">
    <location>
        <begin position="34"/>
        <end position="90"/>
    </location>
</feature>
<feature type="region of interest" description="Disordered" evidence="3">
    <location>
        <begin position="129"/>
        <end position="156"/>
    </location>
</feature>
<feature type="region of interest" description="Disordered" evidence="3">
    <location>
        <begin position="168"/>
        <end position="187"/>
    </location>
</feature>
<feature type="region of interest" description="Disordered" evidence="3">
    <location>
        <begin position="549"/>
        <end position="599"/>
    </location>
</feature>
<feature type="compositionally biased region" description="Basic residues" evidence="3">
    <location>
        <begin position="45"/>
        <end position="55"/>
    </location>
</feature>
<feature type="compositionally biased region" description="Low complexity" evidence="3">
    <location>
        <begin position="58"/>
        <end position="70"/>
    </location>
</feature>
<feature type="compositionally biased region" description="Basic residues" evidence="3">
    <location>
        <begin position="129"/>
        <end position="138"/>
    </location>
</feature>
<feature type="compositionally biased region" description="Basic and acidic residues" evidence="3">
    <location>
        <begin position="139"/>
        <end position="156"/>
    </location>
</feature>
<feature type="compositionally biased region" description="Basic and acidic residues" evidence="3">
    <location>
        <begin position="555"/>
        <end position="566"/>
    </location>
</feature>
<feature type="compositionally biased region" description="Low complexity" evidence="3">
    <location>
        <begin position="572"/>
        <end position="583"/>
    </location>
</feature>
<sequence>MSSIARPPDPCLVAIILIVRSRAGPRFVFHYPPNPLSENGLRAAPKGRRPSRAKSAKSNDSSSSEESGSTSDEDEEEAHAQSQNASSADVWEKLLSPSRSWHKRRFEVGINDLAFVGWPVFVREDGTWRKQRRKKKKTKPEWEGGELGHNEIPGDVRDDADEAIAASTETLSPHTMTASESQRASMGSIRSSRTLSEMLDGDDKDSMTMFNVVFVLDPPLLEYSMRIREIYDNIIKKFAKALKWEQARTDYVWREAQHISHIKEKAKETRTSVNTLYSELINHSSLARAIYTVYSNISASKIASVSLSPDVSISLQIPPLTSTPYLPGPGDKAYPGLWLTTADSVTPADDPTADENTAPHQVLAKHFALLLLSDEATILKDVEASGGALAPALAHYIRCSKPTKSFAQISALSGIPLSTIQMLASHLVYWRRARAIPPLHQRDVYFVSPNCDLSKLEVATAAYQLAFPTLPSLPKMLSALSGTPRPYGSFIPSKDHKEAYFAILAWLLRGGWVTQLRTFARVKVSPEIKMAVERALRREEVDKYLSKQGSSILSDHSKHNGDTSKNDDDDASSSSSSSLASQDSGEETPMPGRYKPDSKLHLSHSLLDQDTSLKTASLILFPHRAPPLESRWLDEIVSRFPKQPRFSVRGRANIDENDPEYAGLRTAMKDLWPVYIKYFNGMDALEKVPVRENLKRKLVWQVLTRLGLVTGSQSYIELDPSEQVLIGVRHW</sequence>
<keyword id="KW-0469">Meiosis</keyword>
<keyword id="KW-1185">Reference proteome</keyword>
<keyword id="KW-0732">Signal</keyword>
<name>NPR3_ASPOR</name>
<comment type="function">
    <text evidence="1">Mediates inactivation of the TORC1 complex in response to amino acid starvation. Required for meiotic nuclear division (By similarity).</text>
</comment>
<comment type="similarity">
    <text evidence="4">Belongs to the NPR3 family.</text>
</comment>
<gene>
    <name type="primary">npr3</name>
    <name type="synonym">rmd11</name>
    <name type="ORF">AO090012000867</name>
</gene>
<accession>Q2UBT9</accession>
<dbReference type="EMBL" id="BA000052">
    <property type="protein sequence ID" value="BAE60976.1"/>
    <property type="molecule type" value="Genomic_DNA"/>
</dbReference>
<dbReference type="SMR" id="Q2UBT9"/>
<dbReference type="STRING" id="510516.Q2UBT9"/>
<dbReference type="EnsemblFungi" id="BAE60976">
    <property type="protein sequence ID" value="BAE60976"/>
    <property type="gene ID" value="AO090012000867"/>
</dbReference>
<dbReference type="HOGENOM" id="CLU_014314_1_0_1"/>
<dbReference type="OMA" id="RTDYVWK"/>
<dbReference type="Proteomes" id="UP000006564">
    <property type="component" value="Chromosome 4"/>
</dbReference>
<dbReference type="GO" id="GO:1990130">
    <property type="term" value="C:GATOR1 complex"/>
    <property type="evidence" value="ECO:0007669"/>
    <property type="project" value="TreeGrafter"/>
</dbReference>
<dbReference type="GO" id="GO:0034198">
    <property type="term" value="P:cellular response to amino acid starvation"/>
    <property type="evidence" value="ECO:0007669"/>
    <property type="project" value="TreeGrafter"/>
</dbReference>
<dbReference type="GO" id="GO:0051321">
    <property type="term" value="P:meiotic cell cycle"/>
    <property type="evidence" value="ECO:0007669"/>
    <property type="project" value="UniProtKB-KW"/>
</dbReference>
<dbReference type="GO" id="GO:1904262">
    <property type="term" value="P:negative regulation of TORC1 signaling"/>
    <property type="evidence" value="ECO:0007669"/>
    <property type="project" value="TreeGrafter"/>
</dbReference>
<dbReference type="GO" id="GO:0010508">
    <property type="term" value="P:positive regulation of autophagy"/>
    <property type="evidence" value="ECO:0007669"/>
    <property type="project" value="TreeGrafter"/>
</dbReference>
<dbReference type="GO" id="GO:0038202">
    <property type="term" value="P:TORC1 signaling"/>
    <property type="evidence" value="ECO:0007669"/>
    <property type="project" value="TreeGrafter"/>
</dbReference>
<dbReference type="InterPro" id="IPR056603">
    <property type="entry name" value="HTH_NPRL3"/>
</dbReference>
<dbReference type="InterPro" id="IPR005365">
    <property type="entry name" value="Npr3"/>
</dbReference>
<dbReference type="PANTHER" id="PTHR13153">
    <property type="entry name" value="CGTHBA PROTEIN -14 GENE PROTEIN"/>
    <property type="match status" value="1"/>
</dbReference>
<dbReference type="PANTHER" id="PTHR13153:SF5">
    <property type="entry name" value="GATOR COMPLEX PROTEIN NPRL3"/>
    <property type="match status" value="1"/>
</dbReference>
<dbReference type="Pfam" id="PF24064">
    <property type="entry name" value="HTH_NPRL3"/>
    <property type="match status" value="1"/>
</dbReference>
<dbReference type="Pfam" id="PF03666">
    <property type="entry name" value="NPR3"/>
    <property type="match status" value="1"/>
</dbReference>
<reference key="1">
    <citation type="journal article" date="2005" name="Nature">
        <title>Genome sequencing and analysis of Aspergillus oryzae.</title>
        <authorList>
            <person name="Machida M."/>
            <person name="Asai K."/>
            <person name="Sano M."/>
            <person name="Tanaka T."/>
            <person name="Kumagai T."/>
            <person name="Terai G."/>
            <person name="Kusumoto K."/>
            <person name="Arima T."/>
            <person name="Akita O."/>
            <person name="Kashiwagi Y."/>
            <person name="Abe K."/>
            <person name="Gomi K."/>
            <person name="Horiuchi H."/>
            <person name="Kitamoto K."/>
            <person name="Kobayashi T."/>
            <person name="Takeuchi M."/>
            <person name="Denning D.W."/>
            <person name="Galagan J.E."/>
            <person name="Nierman W.C."/>
            <person name="Yu J."/>
            <person name="Archer D.B."/>
            <person name="Bennett J.W."/>
            <person name="Bhatnagar D."/>
            <person name="Cleveland T.E."/>
            <person name="Fedorova N.D."/>
            <person name="Gotoh O."/>
            <person name="Horikawa H."/>
            <person name="Hosoyama A."/>
            <person name="Ichinomiya M."/>
            <person name="Igarashi R."/>
            <person name="Iwashita K."/>
            <person name="Juvvadi P.R."/>
            <person name="Kato M."/>
            <person name="Kato Y."/>
            <person name="Kin T."/>
            <person name="Kokubun A."/>
            <person name="Maeda H."/>
            <person name="Maeyama N."/>
            <person name="Maruyama J."/>
            <person name="Nagasaki H."/>
            <person name="Nakajima T."/>
            <person name="Oda K."/>
            <person name="Okada K."/>
            <person name="Paulsen I."/>
            <person name="Sakamoto K."/>
            <person name="Sawano T."/>
            <person name="Takahashi M."/>
            <person name="Takase K."/>
            <person name="Terabayashi Y."/>
            <person name="Wortman J.R."/>
            <person name="Yamada O."/>
            <person name="Yamagata Y."/>
            <person name="Anazawa H."/>
            <person name="Hata Y."/>
            <person name="Koide Y."/>
            <person name="Komori T."/>
            <person name="Koyama Y."/>
            <person name="Minetoki T."/>
            <person name="Suharnan S."/>
            <person name="Tanaka A."/>
            <person name="Isono K."/>
            <person name="Kuhara S."/>
            <person name="Ogasawara N."/>
            <person name="Kikuchi H."/>
        </authorList>
    </citation>
    <scope>NUCLEOTIDE SEQUENCE [LARGE SCALE GENOMIC DNA]</scope>
    <source>
        <strain>ATCC 42149 / RIB 40</strain>
    </source>
</reference>
<protein>
    <recommendedName>
        <fullName>Nitrogen permease regulator 3</fullName>
    </recommendedName>
    <alternativeName>
        <fullName>Required for meiotic nuclear division protein 11</fullName>
    </alternativeName>
</protein>
<evidence type="ECO:0000250" key="1"/>
<evidence type="ECO:0000255" key="2"/>
<evidence type="ECO:0000256" key="3">
    <source>
        <dbReference type="SAM" id="MobiDB-lite"/>
    </source>
</evidence>
<evidence type="ECO:0000305" key="4"/>
<organism>
    <name type="scientific">Aspergillus oryzae (strain ATCC 42149 / RIB 40)</name>
    <name type="common">Yellow koji mold</name>
    <dbReference type="NCBI Taxonomy" id="510516"/>
    <lineage>
        <taxon>Eukaryota</taxon>
        <taxon>Fungi</taxon>
        <taxon>Dikarya</taxon>
        <taxon>Ascomycota</taxon>
        <taxon>Pezizomycotina</taxon>
        <taxon>Eurotiomycetes</taxon>
        <taxon>Eurotiomycetidae</taxon>
        <taxon>Eurotiales</taxon>
        <taxon>Aspergillaceae</taxon>
        <taxon>Aspergillus</taxon>
        <taxon>Aspergillus subgen. Circumdati</taxon>
    </lineage>
</organism>